<sequence>MTQDVEMKEQAAPPSNSLSSTAPSIFHHLKEIASLIETGAYAREVRRISRAVRLTMALRKKLKASSLSAFLNYVLVPGSEVHSRLSSFLPKEDEQDMEVDTATSGAQAPIKNPLPELEIYCYLLVLIFLIDQKKYNEAKACSSASIARLKTVNRRTVDVLASRLYFYYSLCYELTGDLAEIRGYLLALHRIATLRHDELGQETLLNLLLRNYLHYNLYDQAEKLRSKAPRFEAHSNQQFSRYLFYLGKIRTIQLEYTDAKESLLQAARKAPQAALGFRVQCNKWAIIVRLLLGEIPERTVFMQKGMEKALRPYFELTNAVRIGDLELFRKVAEKFSSTFSSDGTNNLIVRLRHNVIRTGLRNISISYSRISLVDVAKKLRLDSPNPVADAESIVSKAIRDGAIDATLDHANGWMVSKETGDIYSTNEPQIAFNSRIAFCLNMHNEAVRALRFPPNSHKEKESAEKRRERQQQEQELAKHIAEEDDDDF</sequence>
<dbReference type="EMBL" id="AB001422">
    <property type="protein sequence ID" value="BAA19252.1"/>
    <property type="molecule type" value="mRNA"/>
</dbReference>
<dbReference type="PIR" id="T02207">
    <property type="entry name" value="T02207"/>
</dbReference>
<dbReference type="RefSeq" id="NP_001311877.1">
    <property type="nucleotide sequence ID" value="NM_001324948.1"/>
</dbReference>
<dbReference type="SMR" id="P93768"/>
<dbReference type="STRING" id="4097.P93768"/>
<dbReference type="PaxDb" id="4097-P93768"/>
<dbReference type="GeneID" id="107767363"/>
<dbReference type="KEGG" id="nta:107767363"/>
<dbReference type="OrthoDB" id="1713558at2759"/>
<dbReference type="Proteomes" id="UP000084051">
    <property type="component" value="Unplaced"/>
</dbReference>
<dbReference type="GO" id="GO:0005634">
    <property type="term" value="C:nucleus"/>
    <property type="evidence" value="ECO:0007669"/>
    <property type="project" value="UniProtKB-SubCell"/>
</dbReference>
<dbReference type="GO" id="GO:0008541">
    <property type="term" value="C:proteasome regulatory particle, lid subcomplex"/>
    <property type="evidence" value="ECO:0000318"/>
    <property type="project" value="GO_Central"/>
</dbReference>
<dbReference type="GO" id="GO:0030234">
    <property type="term" value="F:enzyme regulator activity"/>
    <property type="evidence" value="ECO:0007669"/>
    <property type="project" value="InterPro"/>
</dbReference>
<dbReference type="GO" id="GO:0042176">
    <property type="term" value="P:regulation of protein catabolic process"/>
    <property type="evidence" value="ECO:0007669"/>
    <property type="project" value="InterPro"/>
</dbReference>
<dbReference type="GO" id="GO:0006511">
    <property type="term" value="P:ubiquitin-dependent protein catabolic process"/>
    <property type="evidence" value="ECO:0000318"/>
    <property type="project" value="GO_Central"/>
</dbReference>
<dbReference type="FunFam" id="1.25.40.570:FF:000017">
    <property type="entry name" value="26S proteasome non-ATPase regulatory subunit 3"/>
    <property type="match status" value="1"/>
</dbReference>
<dbReference type="Gene3D" id="1.25.40.570">
    <property type="match status" value="1"/>
</dbReference>
<dbReference type="InterPro" id="IPR013586">
    <property type="entry name" value="26S_Psome_reg_C"/>
</dbReference>
<dbReference type="InterPro" id="IPR050756">
    <property type="entry name" value="CSN3"/>
</dbReference>
<dbReference type="InterPro" id="IPR000717">
    <property type="entry name" value="PCI_dom"/>
</dbReference>
<dbReference type="InterPro" id="IPR036390">
    <property type="entry name" value="WH_DNA-bd_sf"/>
</dbReference>
<dbReference type="PANTHER" id="PTHR10758:SF2">
    <property type="entry name" value="26S PROTEASOME NON-ATPASE REGULATORY SUBUNIT 3"/>
    <property type="match status" value="1"/>
</dbReference>
<dbReference type="PANTHER" id="PTHR10758">
    <property type="entry name" value="26S PROTEASOME NON-ATPASE REGULATORY SUBUNIT 3/COP9 SIGNALOSOME COMPLEX SUBUNIT 3"/>
    <property type="match status" value="1"/>
</dbReference>
<dbReference type="Pfam" id="PF01399">
    <property type="entry name" value="PCI"/>
    <property type="match status" value="1"/>
</dbReference>
<dbReference type="Pfam" id="PF08375">
    <property type="entry name" value="Rpn3_C"/>
    <property type="match status" value="1"/>
</dbReference>
<dbReference type="SMART" id="SM00753">
    <property type="entry name" value="PAM"/>
    <property type="match status" value="1"/>
</dbReference>
<dbReference type="SMART" id="SM00088">
    <property type="entry name" value="PINT"/>
    <property type="match status" value="1"/>
</dbReference>
<dbReference type="SUPFAM" id="SSF46785">
    <property type="entry name" value="Winged helix' DNA-binding domain"/>
    <property type="match status" value="1"/>
</dbReference>
<dbReference type="PROSITE" id="PS50250">
    <property type="entry name" value="PCI"/>
    <property type="match status" value="1"/>
</dbReference>
<feature type="chain" id="PRO_0000173825" description="Probable 26S proteasome non-ATPase regulatory subunit 3">
    <location>
        <begin position="1"/>
        <end position="488"/>
    </location>
</feature>
<feature type="domain" description="PCI" evidence="2">
    <location>
        <begin position="240"/>
        <end position="421"/>
    </location>
</feature>
<feature type="region of interest" description="Disordered" evidence="3">
    <location>
        <begin position="1"/>
        <end position="20"/>
    </location>
</feature>
<feature type="region of interest" description="Disordered" evidence="3">
    <location>
        <begin position="452"/>
        <end position="488"/>
    </location>
</feature>
<feature type="compositionally biased region" description="Basic and acidic residues" evidence="3">
    <location>
        <begin position="456"/>
        <end position="481"/>
    </location>
</feature>
<name>PSMD3_TOBAC</name>
<proteinExistence type="evidence at transcript level"/>
<evidence type="ECO:0000250" key="1"/>
<evidence type="ECO:0000255" key="2">
    <source>
        <dbReference type="PROSITE-ProRule" id="PRU01185"/>
    </source>
</evidence>
<evidence type="ECO:0000256" key="3">
    <source>
        <dbReference type="SAM" id="MobiDB-lite"/>
    </source>
</evidence>
<evidence type="ECO:0000305" key="4"/>
<protein>
    <recommendedName>
        <fullName>Probable 26S proteasome non-ATPase regulatory subunit 3</fullName>
        <shortName>26S proteasome subunit S3</shortName>
    </recommendedName>
    <alternativeName>
        <fullName>26S proteasome regulatory subunit RPN3</fullName>
    </alternativeName>
    <alternativeName>
        <fullName>Nuclear antigen 21D7</fullName>
    </alternativeName>
</protein>
<gene>
    <name type="primary">21D7</name>
</gene>
<organism>
    <name type="scientific">Nicotiana tabacum</name>
    <name type="common">Common tobacco</name>
    <dbReference type="NCBI Taxonomy" id="4097"/>
    <lineage>
        <taxon>Eukaryota</taxon>
        <taxon>Viridiplantae</taxon>
        <taxon>Streptophyta</taxon>
        <taxon>Embryophyta</taxon>
        <taxon>Tracheophyta</taxon>
        <taxon>Spermatophyta</taxon>
        <taxon>Magnoliopsida</taxon>
        <taxon>eudicotyledons</taxon>
        <taxon>Gunneridae</taxon>
        <taxon>Pentapetalae</taxon>
        <taxon>asterids</taxon>
        <taxon>lamiids</taxon>
        <taxon>Solanales</taxon>
        <taxon>Solanaceae</taxon>
        <taxon>Nicotianoideae</taxon>
        <taxon>Nicotianeae</taxon>
        <taxon>Nicotiana</taxon>
    </lineage>
</organism>
<accession>P93768</accession>
<reference key="1">
    <citation type="online journal article" date="1997" name="Plant Gene Register">
        <title>Cloning of a cDNA encoding a tobacco homolog of the carrot 21D7 protein that is a subunit of the 26S proteasome complex.</title>
        <authorList>
            <person name="Ito M."/>
            <person name="Smith M.W."/>
            <person name="Watanabe A."/>
        </authorList>
        <locator>PGR97-084</locator>
    </citation>
    <scope>NUCLEOTIDE SEQUENCE [MRNA]</scope>
</reference>
<comment type="function">
    <text evidence="1">Acts as a regulatory subunit of the 26 proteasome which is involved in the ATP-dependent degradation of ubiquitinated proteins.</text>
</comment>
<comment type="subunit">
    <text evidence="1">The 26S proteasome is composed of a core protease, known as the 20S proteasome, capped at one or both ends by the 19S regulatory complex (RC). The RC is composed of at least 18 different subunits in two subcomplexes, the base and the lid, which form the portions proximal and distal to the 20S proteolytic core, respectively (By similarity).</text>
</comment>
<comment type="subcellular location">
    <subcellularLocation>
        <location>Nucleus</location>
    </subcellularLocation>
</comment>
<comment type="similarity">
    <text evidence="4">Belongs to the proteasome subunit S3 family.</text>
</comment>
<keyword id="KW-0539">Nucleus</keyword>
<keyword id="KW-0647">Proteasome</keyword>
<keyword id="KW-1185">Reference proteome</keyword>